<accession>O29119</accession>
<sequence length="407" mass="45278">MMIDGLPTLDDIPYRGKHVLLRVDINAPIVNSTILDTSRFESHIPTIEALEDSKLVLLAHQSRPGKKDFTSLESHASTLSKLLGKRVEYIDEIFSKGVLRRIKEMENGEVILLENVRFYSEEQLNRSAEEHAECHMVRKLSTAFDLFVNDAFSASHRSHASLVGFVPVLPSVVGRLVENEVTALSKPLKGEGRKIFVLGGAKIKDSVKVLKNVLENNIAEKVVLTGVVANYFLMLKGYDIGEVNRKVVEDNKEDVSDEEMINILKKYSDKIILPIDLGIEKDGVRVDIPLEKFDGKYRIMDIGLETVNQLSEIIPKYDYVVLNGPAGVFEDERFSLGTYEILRAATRAGYSVVGGGHIASAARLFGLSDKFSHISTAGGACIRFLSGEKLVALEVIKEYWAKKWGKS</sequence>
<comment type="catalytic activity">
    <reaction>
        <text>(2R)-3-phosphoglycerate + ATP = (2R)-3-phospho-glyceroyl phosphate + ADP</text>
        <dbReference type="Rhea" id="RHEA:14801"/>
        <dbReference type="ChEBI" id="CHEBI:30616"/>
        <dbReference type="ChEBI" id="CHEBI:57604"/>
        <dbReference type="ChEBI" id="CHEBI:58272"/>
        <dbReference type="ChEBI" id="CHEBI:456216"/>
        <dbReference type="EC" id="2.7.2.3"/>
    </reaction>
</comment>
<comment type="pathway">
    <text>Carbohydrate degradation; glycolysis; pyruvate from D-glyceraldehyde 3-phosphate: step 2/5.</text>
</comment>
<comment type="subcellular location">
    <subcellularLocation>
        <location evidence="2">Cytoplasm</location>
    </subcellularLocation>
</comment>
<comment type="similarity">
    <text evidence="2">Belongs to the phosphoglycerate kinase family.</text>
</comment>
<feature type="chain" id="PRO_0000146050" description="Phosphoglycerate kinase">
    <location>
        <begin position="1"/>
        <end position="407"/>
    </location>
</feature>
<feature type="binding site" evidence="1">
    <location>
        <begin position="24"/>
        <end position="26"/>
    </location>
    <ligand>
        <name>substrate</name>
    </ligand>
</feature>
<feature type="binding site" evidence="1">
    <location>
        <position position="39"/>
    </location>
    <ligand>
        <name>substrate</name>
    </ligand>
</feature>
<feature type="binding site" evidence="1">
    <location>
        <begin position="60"/>
        <end position="63"/>
    </location>
    <ligand>
        <name>substrate</name>
    </ligand>
</feature>
<feature type="binding site" evidence="1">
    <location>
        <position position="117"/>
    </location>
    <ligand>
        <name>substrate</name>
    </ligand>
</feature>
<feature type="binding site" evidence="1">
    <location>
        <position position="157"/>
    </location>
    <ligand>
        <name>substrate</name>
    </ligand>
</feature>
<feature type="binding site" evidence="1">
    <location>
        <position position="330"/>
    </location>
    <ligand>
        <name>ATP</name>
        <dbReference type="ChEBI" id="CHEBI:30616"/>
    </ligand>
</feature>
<feature type="binding site" evidence="1">
    <location>
        <begin position="355"/>
        <end position="358"/>
    </location>
    <ligand>
        <name>ATP</name>
        <dbReference type="ChEBI" id="CHEBI:30616"/>
    </ligand>
</feature>
<gene>
    <name type="primary">pgk</name>
    <name type="ordered locus">AF_1146</name>
</gene>
<protein>
    <recommendedName>
        <fullName>Phosphoglycerate kinase</fullName>
        <ecNumber>2.7.2.3</ecNumber>
    </recommendedName>
</protein>
<evidence type="ECO:0000250" key="1"/>
<evidence type="ECO:0000305" key="2"/>
<dbReference type="EC" id="2.7.2.3"/>
<dbReference type="EMBL" id="AE000782">
    <property type="protein sequence ID" value="AAB90100.1"/>
    <property type="molecule type" value="Genomic_DNA"/>
</dbReference>
<dbReference type="PIR" id="A69393">
    <property type="entry name" value="A69393"/>
</dbReference>
<dbReference type="SMR" id="O29119"/>
<dbReference type="STRING" id="224325.AF_1146"/>
<dbReference type="PaxDb" id="224325-AF_1146"/>
<dbReference type="EnsemblBacteria" id="AAB90100">
    <property type="protein sequence ID" value="AAB90100"/>
    <property type="gene ID" value="AF_1146"/>
</dbReference>
<dbReference type="KEGG" id="afu:AF_1146"/>
<dbReference type="eggNOG" id="arCOG00496">
    <property type="taxonomic scope" value="Archaea"/>
</dbReference>
<dbReference type="HOGENOM" id="CLU_025427_0_2_2"/>
<dbReference type="PhylomeDB" id="O29119"/>
<dbReference type="UniPathway" id="UPA00109">
    <property type="reaction ID" value="UER00185"/>
</dbReference>
<dbReference type="Proteomes" id="UP000002199">
    <property type="component" value="Chromosome"/>
</dbReference>
<dbReference type="GO" id="GO:0005829">
    <property type="term" value="C:cytosol"/>
    <property type="evidence" value="ECO:0007669"/>
    <property type="project" value="TreeGrafter"/>
</dbReference>
<dbReference type="GO" id="GO:0043531">
    <property type="term" value="F:ADP binding"/>
    <property type="evidence" value="ECO:0007669"/>
    <property type="project" value="TreeGrafter"/>
</dbReference>
<dbReference type="GO" id="GO:0005524">
    <property type="term" value="F:ATP binding"/>
    <property type="evidence" value="ECO:0007669"/>
    <property type="project" value="UniProtKB-KW"/>
</dbReference>
<dbReference type="GO" id="GO:0004618">
    <property type="term" value="F:phosphoglycerate kinase activity"/>
    <property type="evidence" value="ECO:0007669"/>
    <property type="project" value="UniProtKB-UniRule"/>
</dbReference>
<dbReference type="GO" id="GO:0006094">
    <property type="term" value="P:gluconeogenesis"/>
    <property type="evidence" value="ECO:0007669"/>
    <property type="project" value="TreeGrafter"/>
</dbReference>
<dbReference type="GO" id="GO:0006096">
    <property type="term" value="P:glycolytic process"/>
    <property type="evidence" value="ECO:0007669"/>
    <property type="project" value="UniProtKB-UniRule"/>
</dbReference>
<dbReference type="FunFam" id="3.40.50.1260:FF:000006">
    <property type="entry name" value="Phosphoglycerate kinase"/>
    <property type="match status" value="1"/>
</dbReference>
<dbReference type="FunFam" id="3.40.50.1260:FF:000012">
    <property type="entry name" value="Phosphoglycerate kinase"/>
    <property type="match status" value="1"/>
</dbReference>
<dbReference type="Gene3D" id="3.40.50.1260">
    <property type="entry name" value="Phosphoglycerate kinase, N-terminal domain"/>
    <property type="match status" value="2"/>
</dbReference>
<dbReference type="HAMAP" id="MF_00145">
    <property type="entry name" value="Phosphoglyc_kinase"/>
    <property type="match status" value="1"/>
</dbReference>
<dbReference type="InterPro" id="IPR001576">
    <property type="entry name" value="Phosphoglycerate_kinase"/>
</dbReference>
<dbReference type="InterPro" id="IPR015911">
    <property type="entry name" value="Phosphoglycerate_kinase_CS"/>
</dbReference>
<dbReference type="InterPro" id="IPR015824">
    <property type="entry name" value="Phosphoglycerate_kinase_N"/>
</dbReference>
<dbReference type="InterPro" id="IPR036043">
    <property type="entry name" value="Phosphoglycerate_kinase_sf"/>
</dbReference>
<dbReference type="PANTHER" id="PTHR11406">
    <property type="entry name" value="PHOSPHOGLYCERATE KINASE"/>
    <property type="match status" value="1"/>
</dbReference>
<dbReference type="PANTHER" id="PTHR11406:SF23">
    <property type="entry name" value="PHOSPHOGLYCERATE KINASE 1, CHLOROPLASTIC-RELATED"/>
    <property type="match status" value="1"/>
</dbReference>
<dbReference type="Pfam" id="PF00162">
    <property type="entry name" value="PGK"/>
    <property type="match status" value="1"/>
</dbReference>
<dbReference type="PIRSF" id="PIRSF000724">
    <property type="entry name" value="Pgk"/>
    <property type="match status" value="1"/>
</dbReference>
<dbReference type="PRINTS" id="PR00477">
    <property type="entry name" value="PHGLYCKINASE"/>
</dbReference>
<dbReference type="SUPFAM" id="SSF53748">
    <property type="entry name" value="Phosphoglycerate kinase"/>
    <property type="match status" value="1"/>
</dbReference>
<dbReference type="PROSITE" id="PS00111">
    <property type="entry name" value="PGLYCERATE_KINASE"/>
    <property type="match status" value="1"/>
</dbReference>
<name>PGK_ARCFU</name>
<reference key="1">
    <citation type="journal article" date="1997" name="Nature">
        <title>The complete genome sequence of the hyperthermophilic, sulphate-reducing archaeon Archaeoglobus fulgidus.</title>
        <authorList>
            <person name="Klenk H.-P."/>
            <person name="Clayton R.A."/>
            <person name="Tomb J.-F."/>
            <person name="White O."/>
            <person name="Nelson K.E."/>
            <person name="Ketchum K.A."/>
            <person name="Dodson R.J."/>
            <person name="Gwinn M.L."/>
            <person name="Hickey E.K."/>
            <person name="Peterson J.D."/>
            <person name="Richardson D.L."/>
            <person name="Kerlavage A.R."/>
            <person name="Graham D.E."/>
            <person name="Kyrpides N.C."/>
            <person name="Fleischmann R.D."/>
            <person name="Quackenbush J."/>
            <person name="Lee N.H."/>
            <person name="Sutton G.G."/>
            <person name="Gill S.R."/>
            <person name="Kirkness E.F."/>
            <person name="Dougherty B.A."/>
            <person name="McKenney K."/>
            <person name="Adams M.D."/>
            <person name="Loftus B.J."/>
            <person name="Peterson S.N."/>
            <person name="Reich C.I."/>
            <person name="McNeil L.K."/>
            <person name="Badger J.H."/>
            <person name="Glodek A."/>
            <person name="Zhou L."/>
            <person name="Overbeek R."/>
            <person name="Gocayne J.D."/>
            <person name="Weidman J.F."/>
            <person name="McDonald L.A."/>
            <person name="Utterback T.R."/>
            <person name="Cotton M.D."/>
            <person name="Spriggs T."/>
            <person name="Artiach P."/>
            <person name="Kaine B.P."/>
            <person name="Sykes S.M."/>
            <person name="Sadow P.W."/>
            <person name="D'Andrea K.P."/>
            <person name="Bowman C."/>
            <person name="Fujii C."/>
            <person name="Garland S.A."/>
            <person name="Mason T.M."/>
            <person name="Olsen G.J."/>
            <person name="Fraser C.M."/>
            <person name="Smith H.O."/>
            <person name="Woese C.R."/>
            <person name="Venter J.C."/>
        </authorList>
    </citation>
    <scope>NUCLEOTIDE SEQUENCE [LARGE SCALE GENOMIC DNA]</scope>
    <source>
        <strain>ATCC 49558 / DSM 4304 / JCM 9628 / NBRC 100126 / VC-16</strain>
    </source>
</reference>
<proteinExistence type="inferred from homology"/>
<keyword id="KW-0067">ATP-binding</keyword>
<keyword id="KW-0963">Cytoplasm</keyword>
<keyword id="KW-0324">Glycolysis</keyword>
<keyword id="KW-0418">Kinase</keyword>
<keyword id="KW-0547">Nucleotide-binding</keyword>
<keyword id="KW-1185">Reference proteome</keyword>
<keyword id="KW-0808">Transferase</keyword>
<organism>
    <name type="scientific">Archaeoglobus fulgidus (strain ATCC 49558 / DSM 4304 / JCM 9628 / NBRC 100126 / VC-16)</name>
    <dbReference type="NCBI Taxonomy" id="224325"/>
    <lineage>
        <taxon>Archaea</taxon>
        <taxon>Methanobacteriati</taxon>
        <taxon>Methanobacteriota</taxon>
        <taxon>Archaeoglobi</taxon>
        <taxon>Archaeoglobales</taxon>
        <taxon>Archaeoglobaceae</taxon>
        <taxon>Archaeoglobus</taxon>
    </lineage>
</organism>